<comment type="function">
    <text evidence="1">Catalyzes the formation of S-adenosylmethionine (AdoMet) from methionine and ATP. The overall synthetic reaction is composed of two sequential steps, AdoMet formation and the subsequent tripolyphosphate hydrolysis which occurs prior to release of AdoMet from the enzyme.</text>
</comment>
<comment type="catalytic activity">
    <reaction evidence="1">
        <text>L-methionine + ATP + H2O = S-adenosyl-L-methionine + phosphate + diphosphate</text>
        <dbReference type="Rhea" id="RHEA:21080"/>
        <dbReference type="ChEBI" id="CHEBI:15377"/>
        <dbReference type="ChEBI" id="CHEBI:30616"/>
        <dbReference type="ChEBI" id="CHEBI:33019"/>
        <dbReference type="ChEBI" id="CHEBI:43474"/>
        <dbReference type="ChEBI" id="CHEBI:57844"/>
        <dbReference type="ChEBI" id="CHEBI:59789"/>
        <dbReference type="EC" id="2.5.1.6"/>
    </reaction>
</comment>
<comment type="cofactor">
    <cofactor evidence="1">
        <name>Mg(2+)</name>
        <dbReference type="ChEBI" id="CHEBI:18420"/>
    </cofactor>
    <text evidence="1">Binds 2 divalent ions per subunit.</text>
</comment>
<comment type="cofactor">
    <cofactor evidence="1">
        <name>K(+)</name>
        <dbReference type="ChEBI" id="CHEBI:29103"/>
    </cofactor>
    <text evidence="1">Binds 1 potassium ion per subunit.</text>
</comment>
<comment type="pathway">
    <text evidence="1">Amino-acid biosynthesis; S-adenosyl-L-methionine biosynthesis; S-adenosyl-L-methionine from L-methionine: step 1/1.</text>
</comment>
<comment type="subunit">
    <text evidence="1">Homotetramer; dimer of dimers.</text>
</comment>
<comment type="subcellular location">
    <subcellularLocation>
        <location evidence="1">Cytoplasm</location>
    </subcellularLocation>
</comment>
<comment type="similarity">
    <text evidence="1">Belongs to the AdoMet synthase family.</text>
</comment>
<accession>Q938W7</accession>
<dbReference type="EC" id="2.5.1.6" evidence="1"/>
<dbReference type="EMBL" id="AY045759">
    <property type="protein sequence ID" value="AAK98791.1"/>
    <property type="molecule type" value="Genomic_DNA"/>
</dbReference>
<dbReference type="RefSeq" id="WP_043472405.1">
    <property type="nucleotide sequence ID" value="NZ_LGSP01000087.1"/>
</dbReference>
<dbReference type="SMR" id="Q938W7"/>
<dbReference type="STRING" id="1906.SFRA_29710"/>
<dbReference type="eggNOG" id="COG0192">
    <property type="taxonomic scope" value="Bacteria"/>
</dbReference>
<dbReference type="UniPathway" id="UPA00315">
    <property type="reaction ID" value="UER00080"/>
</dbReference>
<dbReference type="GO" id="GO:0005737">
    <property type="term" value="C:cytoplasm"/>
    <property type="evidence" value="ECO:0007669"/>
    <property type="project" value="UniProtKB-SubCell"/>
</dbReference>
<dbReference type="GO" id="GO:0005524">
    <property type="term" value="F:ATP binding"/>
    <property type="evidence" value="ECO:0007669"/>
    <property type="project" value="UniProtKB-UniRule"/>
</dbReference>
<dbReference type="GO" id="GO:0000287">
    <property type="term" value="F:magnesium ion binding"/>
    <property type="evidence" value="ECO:0007669"/>
    <property type="project" value="UniProtKB-UniRule"/>
</dbReference>
<dbReference type="GO" id="GO:0004478">
    <property type="term" value="F:methionine adenosyltransferase activity"/>
    <property type="evidence" value="ECO:0007669"/>
    <property type="project" value="UniProtKB-UniRule"/>
</dbReference>
<dbReference type="GO" id="GO:0006730">
    <property type="term" value="P:one-carbon metabolic process"/>
    <property type="evidence" value="ECO:0007669"/>
    <property type="project" value="UniProtKB-KW"/>
</dbReference>
<dbReference type="GO" id="GO:0006556">
    <property type="term" value="P:S-adenosylmethionine biosynthetic process"/>
    <property type="evidence" value="ECO:0007669"/>
    <property type="project" value="UniProtKB-UniRule"/>
</dbReference>
<dbReference type="CDD" id="cd18079">
    <property type="entry name" value="S-AdoMet_synt"/>
    <property type="match status" value="1"/>
</dbReference>
<dbReference type="FunFam" id="3.30.300.10:FF:000006">
    <property type="entry name" value="S-adenosylmethionine synthase"/>
    <property type="match status" value="1"/>
</dbReference>
<dbReference type="Gene3D" id="3.30.300.10">
    <property type="match status" value="3"/>
</dbReference>
<dbReference type="HAMAP" id="MF_00086">
    <property type="entry name" value="S_AdoMet_synth1"/>
    <property type="match status" value="1"/>
</dbReference>
<dbReference type="InterPro" id="IPR022631">
    <property type="entry name" value="ADOMET_SYNTHASE_CS"/>
</dbReference>
<dbReference type="InterPro" id="IPR022630">
    <property type="entry name" value="S-AdoMet_synt_C"/>
</dbReference>
<dbReference type="InterPro" id="IPR022629">
    <property type="entry name" value="S-AdoMet_synt_central"/>
</dbReference>
<dbReference type="InterPro" id="IPR022628">
    <property type="entry name" value="S-AdoMet_synt_N"/>
</dbReference>
<dbReference type="InterPro" id="IPR002133">
    <property type="entry name" value="S-AdoMet_synthetase"/>
</dbReference>
<dbReference type="InterPro" id="IPR022636">
    <property type="entry name" value="S-AdoMet_synthetase_sfam"/>
</dbReference>
<dbReference type="NCBIfam" id="TIGR01034">
    <property type="entry name" value="metK"/>
    <property type="match status" value="1"/>
</dbReference>
<dbReference type="PANTHER" id="PTHR11964">
    <property type="entry name" value="S-ADENOSYLMETHIONINE SYNTHETASE"/>
    <property type="match status" value="1"/>
</dbReference>
<dbReference type="Pfam" id="PF02773">
    <property type="entry name" value="S-AdoMet_synt_C"/>
    <property type="match status" value="1"/>
</dbReference>
<dbReference type="Pfam" id="PF02772">
    <property type="entry name" value="S-AdoMet_synt_M"/>
    <property type="match status" value="1"/>
</dbReference>
<dbReference type="Pfam" id="PF00438">
    <property type="entry name" value="S-AdoMet_synt_N"/>
    <property type="match status" value="1"/>
</dbReference>
<dbReference type="PIRSF" id="PIRSF000497">
    <property type="entry name" value="MAT"/>
    <property type="match status" value="1"/>
</dbReference>
<dbReference type="SUPFAM" id="SSF55973">
    <property type="entry name" value="S-adenosylmethionine synthetase"/>
    <property type="match status" value="3"/>
</dbReference>
<dbReference type="PROSITE" id="PS00376">
    <property type="entry name" value="ADOMET_SYNTHASE_1"/>
    <property type="match status" value="1"/>
</dbReference>
<dbReference type="PROSITE" id="PS00377">
    <property type="entry name" value="ADOMET_SYNTHASE_2"/>
    <property type="match status" value="1"/>
</dbReference>
<evidence type="ECO:0000255" key="1">
    <source>
        <dbReference type="HAMAP-Rule" id="MF_00086"/>
    </source>
</evidence>
<evidence type="ECO:0000256" key="2">
    <source>
        <dbReference type="SAM" id="MobiDB-lite"/>
    </source>
</evidence>
<protein>
    <recommendedName>
        <fullName evidence="1">S-adenosylmethionine synthase</fullName>
        <shortName evidence="1">AdoMet synthase</shortName>
        <ecNumber evidence="1">2.5.1.6</ecNumber>
    </recommendedName>
    <alternativeName>
        <fullName evidence="1">MAT</fullName>
    </alternativeName>
    <alternativeName>
        <fullName evidence="1">Methionine adenosyltransferase</fullName>
    </alternativeName>
</protein>
<reference key="1">
    <citation type="journal article" date="2001" name="J. Antibiot.">
        <title>Influence of ancillary genes, encoding aspects of methionine metabolism, on tylosin biosynthesis in Streptomyces fradiae.</title>
        <authorList>
            <person name="Butler A.R."/>
            <person name="Gandecha A.R."/>
            <person name="Cundliffe E."/>
        </authorList>
    </citation>
    <scope>NUCLEOTIDE SEQUENCE [GENOMIC DNA]</scope>
</reference>
<keyword id="KW-0067">ATP-binding</keyword>
<keyword id="KW-0963">Cytoplasm</keyword>
<keyword id="KW-0460">Magnesium</keyword>
<keyword id="KW-0479">Metal-binding</keyword>
<keyword id="KW-0547">Nucleotide-binding</keyword>
<keyword id="KW-0554">One-carbon metabolism</keyword>
<keyword id="KW-0630">Potassium</keyword>
<keyword id="KW-0808">Transferase</keyword>
<sequence>MSRRLFTSESVTEGHPDKIADRISDTVLDALLARDPRARVAVETLITTGQVHIAGEVTTTAYAPIAQLVRDTVLSIGYDSSAKGFDGASCGVSVSIGAQSPDIARGVDTAYERRGGGTAPGGPGDELDRQGAGDQGLMFGYACDETPELMPLPINLAHRLSRRLSEVRKNGTIPYLRPDGKTQVTIEYDGDKAVRLDTVVVSSQHASGIDLDSLLAPDIRRHVVEPVLAGLAEDGIKLDTAGYRLLVNPTGRFEIGGPMGDAGLTGRKIIIDTYGGMARHGGGAFSGKDPSKVDRSAAYAMRWVAKNVVAAGLASRCEVQVAYAIGKAEPVGLFVETFGTATVDVERIEQAIGEVFDLRPAAIIRDLDLLRPIYAKTAAYGHFGRELPEFTWERTDRTEQLIAAAGL</sequence>
<organism>
    <name type="scientific">Streptomyces fradiae</name>
    <name type="common">Streptomyces roseoflavus</name>
    <dbReference type="NCBI Taxonomy" id="1906"/>
    <lineage>
        <taxon>Bacteria</taxon>
        <taxon>Bacillati</taxon>
        <taxon>Actinomycetota</taxon>
        <taxon>Actinomycetes</taxon>
        <taxon>Kitasatosporales</taxon>
        <taxon>Streptomycetaceae</taxon>
        <taxon>Streptomyces</taxon>
    </lineage>
</organism>
<gene>
    <name evidence="1" type="primary">metK</name>
</gene>
<proteinExistence type="inferred from homology"/>
<name>METK_STRFR</name>
<feature type="chain" id="PRO_0000174599" description="S-adenosylmethionine synthase">
    <location>
        <begin position="1"/>
        <end position="407"/>
    </location>
</feature>
<feature type="region of interest" description="Flexible loop" evidence="1">
    <location>
        <begin position="99"/>
        <end position="109"/>
    </location>
</feature>
<feature type="region of interest" description="Disordered" evidence="2">
    <location>
        <begin position="112"/>
        <end position="131"/>
    </location>
</feature>
<feature type="binding site" description="in other chain" evidence="1">
    <location>
        <position position="15"/>
    </location>
    <ligand>
        <name>ATP</name>
        <dbReference type="ChEBI" id="CHEBI:30616"/>
        <note>ligand shared between two neighboring subunits</note>
    </ligand>
</feature>
<feature type="binding site" evidence="1">
    <location>
        <position position="17"/>
    </location>
    <ligand>
        <name>Mg(2+)</name>
        <dbReference type="ChEBI" id="CHEBI:18420"/>
    </ligand>
</feature>
<feature type="binding site" evidence="1">
    <location>
        <position position="43"/>
    </location>
    <ligand>
        <name>K(+)</name>
        <dbReference type="ChEBI" id="CHEBI:29103"/>
    </ligand>
</feature>
<feature type="binding site" description="in other chain" evidence="1">
    <location>
        <position position="56"/>
    </location>
    <ligand>
        <name>L-methionine</name>
        <dbReference type="ChEBI" id="CHEBI:57844"/>
        <note>ligand shared between two neighboring subunits</note>
    </ligand>
</feature>
<feature type="binding site" description="in other chain" evidence="1">
    <location>
        <position position="99"/>
    </location>
    <ligand>
        <name>L-methionine</name>
        <dbReference type="ChEBI" id="CHEBI:57844"/>
        <note>ligand shared between two neighboring subunits</note>
    </ligand>
</feature>
<feature type="binding site" description="in other chain" evidence="1">
    <location>
        <begin position="179"/>
        <end position="181"/>
    </location>
    <ligand>
        <name>ATP</name>
        <dbReference type="ChEBI" id="CHEBI:30616"/>
        <note>ligand shared between two neighboring subunits</note>
    </ligand>
</feature>
<feature type="binding site" description="in other chain" evidence="1">
    <location>
        <begin position="252"/>
        <end position="253"/>
    </location>
    <ligand>
        <name>ATP</name>
        <dbReference type="ChEBI" id="CHEBI:30616"/>
        <note>ligand shared between two neighboring subunits</note>
    </ligand>
</feature>
<feature type="binding site" evidence="1">
    <location>
        <position position="261"/>
    </location>
    <ligand>
        <name>ATP</name>
        <dbReference type="ChEBI" id="CHEBI:30616"/>
        <note>ligand shared between two neighboring subunits</note>
    </ligand>
</feature>
<feature type="binding site" evidence="1">
    <location>
        <position position="261"/>
    </location>
    <ligand>
        <name>L-methionine</name>
        <dbReference type="ChEBI" id="CHEBI:57844"/>
        <note>ligand shared between two neighboring subunits</note>
    </ligand>
</feature>
<feature type="binding site" description="in other chain" evidence="1">
    <location>
        <begin position="267"/>
        <end position="268"/>
    </location>
    <ligand>
        <name>ATP</name>
        <dbReference type="ChEBI" id="CHEBI:30616"/>
        <note>ligand shared between two neighboring subunits</note>
    </ligand>
</feature>
<feature type="binding site" evidence="1">
    <location>
        <position position="284"/>
    </location>
    <ligand>
        <name>ATP</name>
        <dbReference type="ChEBI" id="CHEBI:30616"/>
        <note>ligand shared between two neighboring subunits</note>
    </ligand>
</feature>
<feature type="binding site" evidence="1">
    <location>
        <position position="288"/>
    </location>
    <ligand>
        <name>ATP</name>
        <dbReference type="ChEBI" id="CHEBI:30616"/>
        <note>ligand shared between two neighboring subunits</note>
    </ligand>
</feature>
<feature type="binding site" description="in other chain" evidence="1">
    <location>
        <position position="292"/>
    </location>
    <ligand>
        <name>L-methionine</name>
        <dbReference type="ChEBI" id="CHEBI:57844"/>
        <note>ligand shared between two neighboring subunits</note>
    </ligand>
</feature>